<feature type="chain" id="PRO_1000132782" description="Chorismate synthase">
    <location>
        <begin position="1"/>
        <end position="407"/>
    </location>
</feature>
<feature type="binding site" evidence="1">
    <location>
        <position position="40"/>
    </location>
    <ligand>
        <name>NADP(+)</name>
        <dbReference type="ChEBI" id="CHEBI:58349"/>
    </ligand>
</feature>
<feature type="binding site" evidence="1">
    <location>
        <position position="46"/>
    </location>
    <ligand>
        <name>NADP(+)</name>
        <dbReference type="ChEBI" id="CHEBI:58349"/>
    </ligand>
</feature>
<feature type="binding site" evidence="1">
    <location>
        <begin position="135"/>
        <end position="137"/>
    </location>
    <ligand>
        <name>FMN</name>
        <dbReference type="ChEBI" id="CHEBI:58210"/>
    </ligand>
</feature>
<feature type="binding site" evidence="1">
    <location>
        <begin position="256"/>
        <end position="257"/>
    </location>
    <ligand>
        <name>FMN</name>
        <dbReference type="ChEBI" id="CHEBI:58210"/>
    </ligand>
</feature>
<feature type="binding site" evidence="1">
    <location>
        <position position="300"/>
    </location>
    <ligand>
        <name>FMN</name>
        <dbReference type="ChEBI" id="CHEBI:58210"/>
    </ligand>
</feature>
<feature type="binding site" evidence="1">
    <location>
        <begin position="315"/>
        <end position="319"/>
    </location>
    <ligand>
        <name>FMN</name>
        <dbReference type="ChEBI" id="CHEBI:58210"/>
    </ligand>
</feature>
<feature type="binding site" evidence="1">
    <location>
        <position position="341"/>
    </location>
    <ligand>
        <name>FMN</name>
        <dbReference type="ChEBI" id="CHEBI:58210"/>
    </ligand>
</feature>
<reference key="1">
    <citation type="journal article" date="2009" name="Nat. Genet.">
        <title>Comparative genomic and phylogeographic analysis of Mycobacterium leprae.</title>
        <authorList>
            <person name="Monot M."/>
            <person name="Honore N."/>
            <person name="Garnier T."/>
            <person name="Zidane N."/>
            <person name="Sherafi D."/>
            <person name="Paniz-Mondolfi A."/>
            <person name="Matsuoka M."/>
            <person name="Taylor G.M."/>
            <person name="Donoghue H.D."/>
            <person name="Bouwman A."/>
            <person name="Mays S."/>
            <person name="Watson C."/>
            <person name="Lockwood D."/>
            <person name="Khamispour A."/>
            <person name="Dowlati Y."/>
            <person name="Jianping S."/>
            <person name="Rea T.H."/>
            <person name="Vera-Cabrera L."/>
            <person name="Stefani M.M."/>
            <person name="Banu S."/>
            <person name="Macdonald M."/>
            <person name="Sapkota B.R."/>
            <person name="Spencer J.S."/>
            <person name="Thomas J."/>
            <person name="Harshman K."/>
            <person name="Singh P."/>
            <person name="Busso P."/>
            <person name="Gattiker A."/>
            <person name="Rougemont J."/>
            <person name="Brennan P.J."/>
            <person name="Cole S.T."/>
        </authorList>
    </citation>
    <scope>NUCLEOTIDE SEQUENCE [LARGE SCALE GENOMIC DNA]</scope>
    <source>
        <strain>Br4923</strain>
    </source>
</reference>
<keyword id="KW-0028">Amino-acid biosynthesis</keyword>
<keyword id="KW-0057">Aromatic amino acid biosynthesis</keyword>
<keyword id="KW-0274">FAD</keyword>
<keyword id="KW-0285">Flavoprotein</keyword>
<keyword id="KW-0288">FMN</keyword>
<keyword id="KW-0456">Lyase</keyword>
<keyword id="KW-0521">NADP</keyword>
<protein>
    <recommendedName>
        <fullName evidence="1">Chorismate synthase</fullName>
        <shortName evidence="1">CS</shortName>
        <ecNumber evidence="1">4.2.3.5</ecNumber>
    </recommendedName>
    <alternativeName>
        <fullName evidence="1">5-enolpyruvylshikimate-3-phosphate phospholyase</fullName>
    </alternativeName>
</protein>
<evidence type="ECO:0000255" key="1">
    <source>
        <dbReference type="HAMAP-Rule" id="MF_00300"/>
    </source>
</evidence>
<organism>
    <name type="scientific">Mycobacterium leprae (strain Br4923)</name>
    <dbReference type="NCBI Taxonomy" id="561304"/>
    <lineage>
        <taxon>Bacteria</taxon>
        <taxon>Bacillati</taxon>
        <taxon>Actinomycetota</taxon>
        <taxon>Actinomycetes</taxon>
        <taxon>Mycobacteriales</taxon>
        <taxon>Mycobacteriaceae</taxon>
        <taxon>Mycobacterium</taxon>
    </lineage>
</organism>
<name>AROC_MYCLB</name>
<dbReference type="EC" id="4.2.3.5" evidence="1"/>
<dbReference type="EMBL" id="FM211192">
    <property type="protein sequence ID" value="CAR70609.1"/>
    <property type="molecule type" value="Genomic_DNA"/>
</dbReference>
<dbReference type="SMR" id="B8ZUK0"/>
<dbReference type="KEGG" id="mlb:MLBr00516"/>
<dbReference type="HOGENOM" id="CLU_034547_2_0_11"/>
<dbReference type="UniPathway" id="UPA00053">
    <property type="reaction ID" value="UER00090"/>
</dbReference>
<dbReference type="Proteomes" id="UP000006900">
    <property type="component" value="Chromosome"/>
</dbReference>
<dbReference type="GO" id="GO:0005829">
    <property type="term" value="C:cytosol"/>
    <property type="evidence" value="ECO:0007669"/>
    <property type="project" value="TreeGrafter"/>
</dbReference>
<dbReference type="GO" id="GO:0004107">
    <property type="term" value="F:chorismate synthase activity"/>
    <property type="evidence" value="ECO:0007669"/>
    <property type="project" value="UniProtKB-UniRule"/>
</dbReference>
<dbReference type="GO" id="GO:0010181">
    <property type="term" value="F:FMN binding"/>
    <property type="evidence" value="ECO:0007669"/>
    <property type="project" value="TreeGrafter"/>
</dbReference>
<dbReference type="GO" id="GO:0008652">
    <property type="term" value="P:amino acid biosynthetic process"/>
    <property type="evidence" value="ECO:0007669"/>
    <property type="project" value="UniProtKB-KW"/>
</dbReference>
<dbReference type="GO" id="GO:0009073">
    <property type="term" value="P:aromatic amino acid family biosynthetic process"/>
    <property type="evidence" value="ECO:0007669"/>
    <property type="project" value="UniProtKB-KW"/>
</dbReference>
<dbReference type="GO" id="GO:0009423">
    <property type="term" value="P:chorismate biosynthetic process"/>
    <property type="evidence" value="ECO:0007669"/>
    <property type="project" value="UniProtKB-UniRule"/>
</dbReference>
<dbReference type="CDD" id="cd07304">
    <property type="entry name" value="Chorismate_synthase"/>
    <property type="match status" value="1"/>
</dbReference>
<dbReference type="FunFam" id="3.60.150.10:FF:000002">
    <property type="entry name" value="Chorismate synthase"/>
    <property type="match status" value="1"/>
</dbReference>
<dbReference type="Gene3D" id="3.60.150.10">
    <property type="entry name" value="Chorismate synthase AroC"/>
    <property type="match status" value="1"/>
</dbReference>
<dbReference type="HAMAP" id="MF_00300">
    <property type="entry name" value="Chorismate_synth"/>
    <property type="match status" value="1"/>
</dbReference>
<dbReference type="InterPro" id="IPR000453">
    <property type="entry name" value="Chorismate_synth"/>
</dbReference>
<dbReference type="InterPro" id="IPR035904">
    <property type="entry name" value="Chorismate_synth_AroC_sf"/>
</dbReference>
<dbReference type="InterPro" id="IPR020541">
    <property type="entry name" value="Chorismate_synthase_CS"/>
</dbReference>
<dbReference type="NCBIfam" id="TIGR00033">
    <property type="entry name" value="aroC"/>
    <property type="match status" value="1"/>
</dbReference>
<dbReference type="NCBIfam" id="NF003793">
    <property type="entry name" value="PRK05382.1"/>
    <property type="match status" value="1"/>
</dbReference>
<dbReference type="PANTHER" id="PTHR21085">
    <property type="entry name" value="CHORISMATE SYNTHASE"/>
    <property type="match status" value="1"/>
</dbReference>
<dbReference type="PANTHER" id="PTHR21085:SF0">
    <property type="entry name" value="CHORISMATE SYNTHASE"/>
    <property type="match status" value="1"/>
</dbReference>
<dbReference type="Pfam" id="PF01264">
    <property type="entry name" value="Chorismate_synt"/>
    <property type="match status" value="1"/>
</dbReference>
<dbReference type="PIRSF" id="PIRSF001456">
    <property type="entry name" value="Chorismate_synth"/>
    <property type="match status" value="1"/>
</dbReference>
<dbReference type="SUPFAM" id="SSF103263">
    <property type="entry name" value="Chorismate synthase, AroC"/>
    <property type="match status" value="1"/>
</dbReference>
<dbReference type="PROSITE" id="PS00787">
    <property type="entry name" value="CHORISMATE_SYNTHASE_1"/>
    <property type="match status" value="1"/>
</dbReference>
<dbReference type="PROSITE" id="PS00788">
    <property type="entry name" value="CHORISMATE_SYNTHASE_2"/>
    <property type="match status" value="1"/>
</dbReference>
<dbReference type="PROSITE" id="PS00789">
    <property type="entry name" value="CHORISMATE_SYNTHASE_3"/>
    <property type="match status" value="1"/>
</dbReference>
<sequence length="407" mass="42473">MLRWITAGESHGRALVAVVEGMVAGVEVTSTAIADQLARRRLGYGRGARMAFERDGVTVLSGVRHGVTLGGPIAIEIDNTEWPKWESVMAADPVDAAELEDSARNAPLTRPRPGHADYAGMLKYGFDDARPVLERASARETAARVAAGTIARQFLRQALGVEVLSHVISIGASARYDGPPPGSEDLTVIDASLVRAFDEQVEKSMIAEIEAAKKDGDTLGGVVEAVVLGLPVGLGSFTSGDDRLDSQLAAAVMGIQAIKGVEIGDGFATARRRGSCAHDEMYSGPGGVVRLTNRSGGLEGGMTNGQPLRVRAAMKPISTVPRALATVDLATGEEAIAIHQRSDVCAVPAAGVVVETMVALVLARAALRKFGGDSLGETRRNLAAYQRAVADREAPVAQYCGESGIGG</sequence>
<proteinExistence type="inferred from homology"/>
<comment type="function">
    <text evidence="1">Catalyzes the anti-1,4-elimination of the C-3 phosphate and the C-6 proR hydrogen from 5-enolpyruvylshikimate-3-phosphate (EPSP) to yield chorismate, which is the branch point compound that serves as the starting substrate for the three terminal pathways of aromatic amino acid biosynthesis. This reaction introduces a second double bond into the aromatic ring system.</text>
</comment>
<comment type="catalytic activity">
    <reaction evidence="1">
        <text>5-O-(1-carboxyvinyl)-3-phosphoshikimate = chorismate + phosphate</text>
        <dbReference type="Rhea" id="RHEA:21020"/>
        <dbReference type="ChEBI" id="CHEBI:29748"/>
        <dbReference type="ChEBI" id="CHEBI:43474"/>
        <dbReference type="ChEBI" id="CHEBI:57701"/>
        <dbReference type="EC" id="4.2.3.5"/>
    </reaction>
</comment>
<comment type="cofactor">
    <cofactor evidence="1">
        <name>FMNH2</name>
        <dbReference type="ChEBI" id="CHEBI:57618"/>
    </cofactor>
    <text evidence="1">Reduced FMN (FMNH(2)).</text>
</comment>
<comment type="pathway">
    <text evidence="1">Metabolic intermediate biosynthesis; chorismate biosynthesis; chorismate from D-erythrose 4-phosphate and phosphoenolpyruvate: step 7/7.</text>
</comment>
<comment type="subunit">
    <text evidence="1">Homotetramer.</text>
</comment>
<comment type="similarity">
    <text evidence="1">Belongs to the chorismate synthase family.</text>
</comment>
<gene>
    <name evidence="1" type="primary">aroC</name>
    <name type="ordered locus">MLBr00516</name>
</gene>
<accession>B8ZUK0</accession>